<feature type="chain" id="PRO_0000381991" description="Uncharacterized protein YshB">
    <location>
        <begin position="1"/>
        <end position="36"/>
    </location>
</feature>
<name>YSHB_ECOLI</name>
<comment type="induction">
    <text evidence="1">In stationary phase (at protein level).</text>
</comment>
<organism>
    <name type="scientific">Escherichia coli (strain K12)</name>
    <dbReference type="NCBI Taxonomy" id="83333"/>
    <lineage>
        <taxon>Bacteria</taxon>
        <taxon>Pseudomonadati</taxon>
        <taxon>Pseudomonadota</taxon>
        <taxon>Gammaproteobacteria</taxon>
        <taxon>Enterobacterales</taxon>
        <taxon>Enterobacteriaceae</taxon>
        <taxon>Escherichia</taxon>
    </lineage>
</organism>
<evidence type="ECO:0000269" key="1">
    <source>
    </source>
</evidence>
<sequence length="36" mass="3618">MLESIINLVSSGAVDSHTPQTAVAAVLCAAMIGLFS</sequence>
<proteinExistence type="evidence at protein level"/>
<gene>
    <name type="primary">yshB</name>
    <name type="ordered locus">b4686</name>
    <name type="ordered locus">JW3839.1</name>
</gene>
<protein>
    <recommendedName>
        <fullName>Uncharacterized protein YshB</fullName>
    </recommendedName>
</protein>
<keyword id="KW-1185">Reference proteome</keyword>
<dbReference type="EMBL" id="U00096">
    <property type="protein sequence ID" value="ACO60012.1"/>
    <property type="molecule type" value="Genomic_DNA"/>
</dbReference>
<dbReference type="EMBL" id="AP009048">
    <property type="status" value="NOT_ANNOTATED_CDS"/>
    <property type="molecule type" value="Genomic_DNA"/>
</dbReference>
<dbReference type="RefSeq" id="WP_000893994.1">
    <property type="nucleotide sequence ID" value="NZ_STEB01000017.1"/>
</dbReference>
<dbReference type="RefSeq" id="YP_002791260.1">
    <property type="nucleotide sequence ID" value="NC_000913.3"/>
</dbReference>
<dbReference type="STRING" id="511145.b4686"/>
<dbReference type="PaxDb" id="511145-b4686"/>
<dbReference type="EnsemblBacteria" id="ACO60012">
    <property type="protein sequence ID" value="ACO60012"/>
    <property type="gene ID" value="b4686"/>
</dbReference>
<dbReference type="GeneID" id="7751621"/>
<dbReference type="KEGG" id="eco:b4686"/>
<dbReference type="KEGG" id="ecoc:C3026_20905"/>
<dbReference type="PATRIC" id="fig|511145.12.peg.3979"/>
<dbReference type="eggNOG" id="ENOG502ZG52">
    <property type="taxonomic scope" value="Bacteria"/>
</dbReference>
<dbReference type="InParanoid" id="C1P620"/>
<dbReference type="OrthoDB" id="6611600at2"/>
<dbReference type="BioCyc" id="EcoCyc:MONOMER0-2884"/>
<dbReference type="PRO" id="PR:C1P620"/>
<dbReference type="Proteomes" id="UP000000625">
    <property type="component" value="Chromosome"/>
</dbReference>
<dbReference type="InterPro" id="IPR047812">
    <property type="entry name" value="YshB"/>
</dbReference>
<dbReference type="NCBIfam" id="NF033841">
    <property type="entry name" value="small_YshB"/>
    <property type="match status" value="1"/>
</dbReference>
<accession>C1P620</accession>
<reference key="1">
    <citation type="journal article" date="1997" name="Science">
        <title>The complete genome sequence of Escherichia coli K-12.</title>
        <authorList>
            <person name="Blattner F.R."/>
            <person name="Plunkett G. III"/>
            <person name="Bloch C.A."/>
            <person name="Perna N.T."/>
            <person name="Burland V."/>
            <person name="Riley M."/>
            <person name="Collado-Vides J."/>
            <person name="Glasner J.D."/>
            <person name="Rode C.K."/>
            <person name="Mayhew G.F."/>
            <person name="Gregor J."/>
            <person name="Davis N.W."/>
            <person name="Kirkpatrick H.A."/>
            <person name="Goeden M.A."/>
            <person name="Rose D.J."/>
            <person name="Mau B."/>
            <person name="Shao Y."/>
        </authorList>
    </citation>
    <scope>NUCLEOTIDE SEQUENCE [LARGE SCALE GENOMIC DNA]</scope>
    <source>
        <strain>K12 / MG1655 / ATCC 47076</strain>
    </source>
</reference>
<reference key="2">
    <citation type="journal article" date="2006" name="Mol. Syst. Biol.">
        <title>Highly accurate genome sequences of Escherichia coli K-12 strains MG1655 and W3110.</title>
        <authorList>
            <person name="Hayashi K."/>
            <person name="Morooka N."/>
            <person name="Yamamoto Y."/>
            <person name="Fujita K."/>
            <person name="Isono K."/>
            <person name="Choi S."/>
            <person name="Ohtsubo E."/>
            <person name="Baba T."/>
            <person name="Wanner B.L."/>
            <person name="Mori H."/>
            <person name="Horiuchi T."/>
        </authorList>
    </citation>
    <scope>NUCLEOTIDE SEQUENCE [LARGE SCALE GENOMIC DNA]</scope>
    <source>
        <strain>K12 / W3110 / ATCC 27325 / DSM 5911</strain>
    </source>
</reference>
<reference key="3">
    <citation type="journal article" date="2008" name="Mol. Microbiol.">
        <title>Small membrane proteins found by comparative genomics and ribosome binding site models.</title>
        <authorList>
            <person name="Hemm M.R."/>
            <person name="Paul B.J."/>
            <person name="Schneider T.D."/>
            <person name="Storz G."/>
            <person name="Rudd K.E."/>
        </authorList>
    </citation>
    <scope>IDENTIFICATION</scope>
    <scope>INDUCTION</scope>
    <source>
        <strain>K12 / MG1655 / ATCC 47076</strain>
    </source>
</reference>